<sequence>MSLLEFFRPQKKTSASLAKERLQIIVAERRSQNDPAPSYLPQLKEDILKVISKYVAIDPAMVDLTFEHKDDDISVLELNVKLPDEEK</sequence>
<organism>
    <name type="scientific">Vibrio vulnificus (strain CMCP6)</name>
    <dbReference type="NCBI Taxonomy" id="216895"/>
    <lineage>
        <taxon>Bacteria</taxon>
        <taxon>Pseudomonadati</taxon>
        <taxon>Pseudomonadota</taxon>
        <taxon>Gammaproteobacteria</taxon>
        <taxon>Vibrionales</taxon>
        <taxon>Vibrionaceae</taxon>
        <taxon>Vibrio</taxon>
    </lineage>
</organism>
<proteinExistence type="inferred from homology"/>
<gene>
    <name evidence="1" type="primary">minE</name>
    <name type="ordered locus">VV1_0134</name>
</gene>
<comment type="function">
    <text evidence="1">Prevents the cell division inhibition by proteins MinC and MinD at internal division sites while permitting inhibition at polar sites. This ensures cell division at the proper site by restricting the formation of a division septum at the midpoint of the long axis of the cell.</text>
</comment>
<comment type="similarity">
    <text evidence="1">Belongs to the MinE family.</text>
</comment>
<keyword id="KW-0131">Cell cycle</keyword>
<keyword id="KW-0132">Cell division</keyword>
<evidence type="ECO:0000255" key="1">
    <source>
        <dbReference type="HAMAP-Rule" id="MF_00262"/>
    </source>
</evidence>
<accession>Q8DFS2</accession>
<protein>
    <recommendedName>
        <fullName evidence="1">Cell division topological specificity factor</fullName>
    </recommendedName>
</protein>
<dbReference type="EMBL" id="AE016795">
    <property type="protein sequence ID" value="AAO08672.1"/>
    <property type="molecule type" value="Genomic_DNA"/>
</dbReference>
<dbReference type="RefSeq" id="WP_011078251.1">
    <property type="nucleotide sequence ID" value="NC_004459.3"/>
</dbReference>
<dbReference type="SMR" id="Q8DFS2"/>
<dbReference type="KEGG" id="vvu:VV1_0134"/>
<dbReference type="HOGENOM" id="CLU_137929_2_2_6"/>
<dbReference type="Proteomes" id="UP000002275">
    <property type="component" value="Chromosome 1"/>
</dbReference>
<dbReference type="GO" id="GO:0051301">
    <property type="term" value="P:cell division"/>
    <property type="evidence" value="ECO:0007669"/>
    <property type="project" value="UniProtKB-KW"/>
</dbReference>
<dbReference type="GO" id="GO:0032955">
    <property type="term" value="P:regulation of division septum assembly"/>
    <property type="evidence" value="ECO:0007669"/>
    <property type="project" value="InterPro"/>
</dbReference>
<dbReference type="FunFam" id="3.30.1070.10:FF:000001">
    <property type="entry name" value="Cell division topological specificity factor"/>
    <property type="match status" value="1"/>
</dbReference>
<dbReference type="Gene3D" id="3.30.1070.10">
    <property type="entry name" value="Cell division topological specificity factor MinE"/>
    <property type="match status" value="1"/>
</dbReference>
<dbReference type="HAMAP" id="MF_00262">
    <property type="entry name" value="MinE"/>
    <property type="match status" value="1"/>
</dbReference>
<dbReference type="InterPro" id="IPR005527">
    <property type="entry name" value="MinE"/>
</dbReference>
<dbReference type="InterPro" id="IPR036707">
    <property type="entry name" value="MinE_sf"/>
</dbReference>
<dbReference type="NCBIfam" id="TIGR01215">
    <property type="entry name" value="minE"/>
    <property type="match status" value="1"/>
</dbReference>
<dbReference type="NCBIfam" id="NF001422">
    <property type="entry name" value="PRK00296.1"/>
    <property type="match status" value="1"/>
</dbReference>
<dbReference type="Pfam" id="PF03776">
    <property type="entry name" value="MinE"/>
    <property type="match status" value="1"/>
</dbReference>
<dbReference type="SUPFAM" id="SSF55229">
    <property type="entry name" value="Cell division protein MinE topological specificity domain"/>
    <property type="match status" value="1"/>
</dbReference>
<name>MINE_VIBVU</name>
<reference key="1">
    <citation type="submission" date="2002-12" db="EMBL/GenBank/DDBJ databases">
        <title>Complete genome sequence of Vibrio vulnificus CMCP6.</title>
        <authorList>
            <person name="Rhee J.H."/>
            <person name="Kim S.Y."/>
            <person name="Chung S.S."/>
            <person name="Kim J.J."/>
            <person name="Moon Y.H."/>
            <person name="Jeong H."/>
            <person name="Choy H.E."/>
        </authorList>
    </citation>
    <scope>NUCLEOTIDE SEQUENCE [LARGE SCALE GENOMIC DNA]</scope>
    <source>
        <strain>CMCP6</strain>
    </source>
</reference>
<feature type="chain" id="PRO_0000205892" description="Cell division topological specificity factor">
    <location>
        <begin position="1"/>
        <end position="87"/>
    </location>
</feature>